<protein>
    <recommendedName>
        <fullName evidence="2">Large ribosomal subunit protein eL13</fullName>
    </recommendedName>
    <alternativeName>
        <fullName>60S ribosomal protein L13</fullName>
    </alternativeName>
    <alternativeName>
        <fullName>Breast basic conserved protein 1</fullName>
    </alternativeName>
</protein>
<proteinExistence type="evidence at protein level"/>
<feature type="chain" id="PRO_0000192922" description="Large ribosomal subunit protein eL13">
    <location>
        <begin position="1"/>
        <end position="211"/>
    </location>
</feature>
<dbReference type="EMBL" id="D26318">
    <property type="protein sequence ID" value="BAA05377.1"/>
    <property type="molecule type" value="mRNA"/>
</dbReference>
<dbReference type="RefSeq" id="NP_990330.1">
    <property type="nucleotide sequence ID" value="NM_204999.2"/>
</dbReference>
<dbReference type="PDB" id="8Q7Z">
    <property type="method" value="EM"/>
    <property type="resolution" value="2.50 A"/>
    <property type="chains" value="BL=1-211"/>
</dbReference>
<dbReference type="PDB" id="8Q87">
    <property type="method" value="EM"/>
    <property type="resolution" value="2.40 A"/>
    <property type="chains" value="BL=1-211"/>
</dbReference>
<dbReference type="PDBsum" id="8Q7Z"/>
<dbReference type="PDBsum" id="8Q87"/>
<dbReference type="SMR" id="P41125"/>
<dbReference type="FunCoup" id="P41125">
    <property type="interactions" value="2856"/>
</dbReference>
<dbReference type="STRING" id="9031.ENSGALP00000062041"/>
<dbReference type="PaxDb" id="9031-ENSGALP00000009960"/>
<dbReference type="Ensembl" id="ENSGALT00010019067.1">
    <property type="protein sequence ID" value="ENSGALP00010010616.1"/>
    <property type="gene ID" value="ENSGALG00010007998.1"/>
</dbReference>
<dbReference type="GeneID" id="395849"/>
<dbReference type="KEGG" id="gga:395849"/>
<dbReference type="CTD" id="6137"/>
<dbReference type="VEuPathDB" id="HostDB:geneid_395849"/>
<dbReference type="eggNOG" id="KOG3295">
    <property type="taxonomic scope" value="Eukaryota"/>
</dbReference>
<dbReference type="GeneTree" id="ENSGT00390000007818"/>
<dbReference type="HOGENOM" id="CLU_075696_1_0_1"/>
<dbReference type="InParanoid" id="P41125"/>
<dbReference type="OMA" id="IQKNHFR"/>
<dbReference type="OrthoDB" id="10264538at2759"/>
<dbReference type="PhylomeDB" id="P41125"/>
<dbReference type="TreeFam" id="TF300073"/>
<dbReference type="Reactome" id="R-GGA-1799339">
    <property type="pathway name" value="SRP-dependent cotranslational protein targeting to membrane"/>
</dbReference>
<dbReference type="Reactome" id="R-GGA-72689">
    <property type="pathway name" value="Formation of a pool of free 40S subunits"/>
</dbReference>
<dbReference type="Reactome" id="R-GGA-72706">
    <property type="pathway name" value="GTP hydrolysis and joining of the 60S ribosomal subunit"/>
</dbReference>
<dbReference type="Reactome" id="R-GGA-975956">
    <property type="pathway name" value="Nonsense Mediated Decay (NMD) independent of the Exon Junction Complex (EJC)"/>
</dbReference>
<dbReference type="Reactome" id="R-GGA-975957">
    <property type="pathway name" value="Nonsense Mediated Decay (NMD) enhanced by the Exon Junction Complex (EJC)"/>
</dbReference>
<dbReference type="PRO" id="PR:P41125"/>
<dbReference type="Proteomes" id="UP000000539">
    <property type="component" value="Chromosome 11"/>
</dbReference>
<dbReference type="Bgee" id="ENSGALG00000006179">
    <property type="expression patterns" value="Expressed in granulocyte and 13 other cell types or tissues"/>
</dbReference>
<dbReference type="GO" id="GO:0005829">
    <property type="term" value="C:cytosol"/>
    <property type="evidence" value="ECO:0000250"/>
    <property type="project" value="UniProtKB"/>
</dbReference>
<dbReference type="GO" id="GO:0022625">
    <property type="term" value="C:cytosolic large ribosomal subunit"/>
    <property type="evidence" value="ECO:0000318"/>
    <property type="project" value="GO_Central"/>
</dbReference>
<dbReference type="GO" id="GO:0005783">
    <property type="term" value="C:endoplasmic reticulum"/>
    <property type="evidence" value="ECO:0007669"/>
    <property type="project" value="Ensembl"/>
</dbReference>
<dbReference type="GO" id="GO:0005730">
    <property type="term" value="C:nucleolus"/>
    <property type="evidence" value="ECO:0007669"/>
    <property type="project" value="Ensembl"/>
</dbReference>
<dbReference type="GO" id="GO:0045202">
    <property type="term" value="C:synapse"/>
    <property type="evidence" value="ECO:0007669"/>
    <property type="project" value="Ensembl"/>
</dbReference>
<dbReference type="GO" id="GO:0003723">
    <property type="term" value="F:RNA binding"/>
    <property type="evidence" value="ECO:0000318"/>
    <property type="project" value="GO_Central"/>
</dbReference>
<dbReference type="GO" id="GO:0003735">
    <property type="term" value="F:structural constituent of ribosome"/>
    <property type="evidence" value="ECO:0000318"/>
    <property type="project" value="GO_Central"/>
</dbReference>
<dbReference type="GO" id="GO:0060348">
    <property type="term" value="P:bone development"/>
    <property type="evidence" value="ECO:0007669"/>
    <property type="project" value="Ensembl"/>
</dbReference>
<dbReference type="GO" id="GO:0006412">
    <property type="term" value="P:translation"/>
    <property type="evidence" value="ECO:0007669"/>
    <property type="project" value="InterPro"/>
</dbReference>
<dbReference type="FunFam" id="1.20.5.110:FF:000003">
    <property type="entry name" value="60S ribosomal protein L13"/>
    <property type="match status" value="1"/>
</dbReference>
<dbReference type="Gene3D" id="1.20.5.110">
    <property type="match status" value="1"/>
</dbReference>
<dbReference type="HAMAP" id="MF_00499">
    <property type="entry name" value="Ribosomal_eL13"/>
    <property type="match status" value="1"/>
</dbReference>
<dbReference type="InterPro" id="IPR001380">
    <property type="entry name" value="Ribosomal_eL13"/>
</dbReference>
<dbReference type="InterPro" id="IPR018256">
    <property type="entry name" value="Ribosomal_eL13_CS"/>
</dbReference>
<dbReference type="PANTHER" id="PTHR11722">
    <property type="entry name" value="60S RIBOSOMAL PROTEIN L13"/>
    <property type="match status" value="1"/>
</dbReference>
<dbReference type="PANTHER" id="PTHR11722:SF0">
    <property type="entry name" value="LARGE RIBOSOMAL SUBUNIT PROTEIN EL13"/>
    <property type="match status" value="1"/>
</dbReference>
<dbReference type="Pfam" id="PF01294">
    <property type="entry name" value="Ribosomal_L13e"/>
    <property type="match status" value="1"/>
</dbReference>
<dbReference type="PROSITE" id="PS01104">
    <property type="entry name" value="RIBOSOMAL_L13E"/>
    <property type="match status" value="1"/>
</dbReference>
<accession>P41125</accession>
<organism>
    <name type="scientific">Gallus gallus</name>
    <name type="common">Chicken</name>
    <dbReference type="NCBI Taxonomy" id="9031"/>
    <lineage>
        <taxon>Eukaryota</taxon>
        <taxon>Metazoa</taxon>
        <taxon>Chordata</taxon>
        <taxon>Craniata</taxon>
        <taxon>Vertebrata</taxon>
        <taxon>Euteleostomi</taxon>
        <taxon>Archelosauria</taxon>
        <taxon>Archosauria</taxon>
        <taxon>Dinosauria</taxon>
        <taxon>Saurischia</taxon>
        <taxon>Theropoda</taxon>
        <taxon>Coelurosauria</taxon>
        <taxon>Aves</taxon>
        <taxon>Neognathae</taxon>
        <taxon>Galloanserae</taxon>
        <taxon>Galliformes</taxon>
        <taxon>Phasianidae</taxon>
        <taxon>Phasianinae</taxon>
        <taxon>Gallus</taxon>
    </lineage>
</organism>
<keyword id="KW-0002">3D-structure</keyword>
<keyword id="KW-0963">Cytoplasm</keyword>
<keyword id="KW-1185">Reference proteome</keyword>
<keyword id="KW-0687">Ribonucleoprotein</keyword>
<keyword id="KW-0689">Ribosomal protein</keyword>
<evidence type="ECO:0000250" key="1">
    <source>
        <dbReference type="UniProtKB" id="P26373"/>
    </source>
</evidence>
<evidence type="ECO:0000305" key="2"/>
<sequence>MAPSRNGMILKPHFHKDWQRRVATWFNQPARKIRRRKARQAKARRIAPRPVAGPIRPIVRCPTVRYHKKVRAGRGFSLEELKLAGINKRFARTIGISVDPRRRNKSTESLQANVQRLKEYRSKLILFPRKPSAPKKGDSSPEELKMATQLSGPVMPIRNVFKREKARVISEEEKNFKAFASLRMARANARLFGIRAKRAKEAAEQDVEKKK</sequence>
<comment type="function">
    <text evidence="1">Component of the ribosome, a large ribonucleoprotein complex responsible for the synthesis of proteins in the cell. The small ribosomal subunit (SSU) binds messenger RNAs (mRNAs) and translates the encoded message by selecting cognate aminoacyl-transfer RNA (tRNA) molecules. The large subunit (LSU) contains the ribosomal catalytic site termed the peptidyl transferase center (PTC), which catalyzes the formation of peptide bonds, thereby polymerizing the amino acids delivered by tRNAs into a polypeptide chain. The nascent polypeptides leave the ribosome through a tunnel in the LSU and interact with protein factors that function in enzymatic processing, targeting, and the membrane insertion of nascent chains at the exit of the ribosomal tunnel. As part of the LSU, it is probably required for its formation and the maturation of rRNAs.</text>
</comment>
<comment type="subunit">
    <text evidence="1">Component of the 60S large ribosomal subunit (LSU).</text>
</comment>
<comment type="subcellular location">
    <subcellularLocation>
        <location evidence="1">Cytoplasm</location>
    </subcellularLocation>
</comment>
<comment type="similarity">
    <text evidence="2">Belongs to the eukaryotic ribosomal protein eL13 family.</text>
</comment>
<gene>
    <name type="primary">RPL13</name>
    <name type="synonym">BBC1</name>
</gene>
<reference key="1">
    <citation type="journal article" date="1996" name="Int. J. Dev. Biol.">
        <title>Characterization of terminally differentiated cell state by categorizing cDNA clones derived from chicken lens fibers.</title>
        <authorList>
            <person name="Sawada K."/>
            <person name="Agata K."/>
            <person name="Eguchi G."/>
        </authorList>
    </citation>
    <scope>NUCLEOTIDE SEQUENCE [MRNA]</scope>
    <source>
        <tissue>Lens fibers</tissue>
    </source>
</reference>
<name>RL13_CHICK</name>